<proteinExistence type="inferred from homology"/>
<evidence type="ECO:0000250" key="1"/>
<evidence type="ECO:0000305" key="2"/>
<reference key="1">
    <citation type="journal article" date="1995" name="Science">
        <title>Whole-genome random sequencing and assembly of Haemophilus influenzae Rd.</title>
        <authorList>
            <person name="Fleischmann R.D."/>
            <person name="Adams M.D."/>
            <person name="White O."/>
            <person name="Clayton R.A."/>
            <person name="Kirkness E.F."/>
            <person name="Kerlavage A.R."/>
            <person name="Bult C.J."/>
            <person name="Tomb J.-F."/>
            <person name="Dougherty B.A."/>
            <person name="Merrick J.M."/>
            <person name="McKenney K."/>
            <person name="Sutton G.G."/>
            <person name="FitzHugh W."/>
            <person name="Fields C.A."/>
            <person name="Gocayne J.D."/>
            <person name="Scott J.D."/>
            <person name="Shirley R."/>
            <person name="Liu L.-I."/>
            <person name="Glodek A."/>
            <person name="Kelley J.M."/>
            <person name="Weidman J.F."/>
            <person name="Phillips C.A."/>
            <person name="Spriggs T."/>
            <person name="Hedblom E."/>
            <person name="Cotton M.D."/>
            <person name="Utterback T.R."/>
            <person name="Hanna M.C."/>
            <person name="Nguyen D.T."/>
            <person name="Saudek D.M."/>
            <person name="Brandon R.C."/>
            <person name="Fine L.D."/>
            <person name="Fritchman J.L."/>
            <person name="Fuhrmann J.L."/>
            <person name="Geoghagen N.S.M."/>
            <person name="Gnehm C.L."/>
            <person name="McDonald L.A."/>
            <person name="Small K.V."/>
            <person name="Fraser C.M."/>
            <person name="Smith H.O."/>
            <person name="Venter J.C."/>
        </authorList>
    </citation>
    <scope>NUCLEOTIDE SEQUENCE [LARGE SCALE GENOMIC DNA]</scope>
    <source>
        <strain>ATCC 51907 / DSM 11121 / KW20 / Rd</strain>
    </source>
</reference>
<feature type="chain" id="PRO_0000120577" description="Molybdopterin-synthase adenylyltransferase">
    <location>
        <begin position="1"/>
        <end position="243"/>
    </location>
</feature>
<feature type="binding site" evidence="1">
    <location>
        <position position="41"/>
    </location>
    <ligand>
        <name>ATP</name>
        <dbReference type="ChEBI" id="CHEBI:30616"/>
    </ligand>
</feature>
<feature type="binding site" evidence="1">
    <location>
        <position position="62"/>
    </location>
    <ligand>
        <name>ATP</name>
        <dbReference type="ChEBI" id="CHEBI:30616"/>
    </ligand>
</feature>
<feature type="binding site" evidence="1">
    <location>
        <begin position="69"/>
        <end position="73"/>
    </location>
    <ligand>
        <name>ATP</name>
        <dbReference type="ChEBI" id="CHEBI:30616"/>
    </ligand>
</feature>
<feature type="binding site" evidence="1">
    <location>
        <position position="86"/>
    </location>
    <ligand>
        <name>ATP</name>
        <dbReference type="ChEBI" id="CHEBI:30616"/>
    </ligand>
</feature>
<feature type="binding site" evidence="1">
    <location>
        <begin position="130"/>
        <end position="131"/>
    </location>
    <ligand>
        <name>ATP</name>
        <dbReference type="ChEBI" id="CHEBI:30616"/>
    </ligand>
</feature>
<keyword id="KW-0067">ATP-binding</keyword>
<keyword id="KW-0501">Molybdenum cofactor biosynthesis</keyword>
<keyword id="KW-0547">Nucleotide-binding</keyword>
<keyword id="KW-0548">Nucleotidyltransferase</keyword>
<keyword id="KW-1185">Reference proteome</keyword>
<keyword id="KW-0808">Transferase</keyword>
<accession>P45211</accession>
<dbReference type="EC" id="2.7.7.80"/>
<dbReference type="EMBL" id="L42023">
    <property type="protein sequence ID" value="AAC23099.1"/>
    <property type="molecule type" value="Genomic_DNA"/>
</dbReference>
<dbReference type="PIR" id="C64124">
    <property type="entry name" value="C64124"/>
</dbReference>
<dbReference type="RefSeq" id="NP_439601.1">
    <property type="nucleotide sequence ID" value="NC_000907.1"/>
</dbReference>
<dbReference type="SMR" id="P45211"/>
<dbReference type="STRING" id="71421.HI_1449"/>
<dbReference type="EnsemblBacteria" id="AAC23099">
    <property type="protein sequence ID" value="AAC23099"/>
    <property type="gene ID" value="HI_1449"/>
</dbReference>
<dbReference type="KEGG" id="hin:HI_1449"/>
<dbReference type="PATRIC" id="fig|71421.8.peg.1511"/>
<dbReference type="eggNOG" id="COG0476">
    <property type="taxonomic scope" value="Bacteria"/>
</dbReference>
<dbReference type="HOGENOM" id="CLU_013325_10_3_6"/>
<dbReference type="OrthoDB" id="9804286at2"/>
<dbReference type="PhylomeDB" id="P45211"/>
<dbReference type="BioCyc" id="HINF71421:G1GJ1-1475-MONOMER"/>
<dbReference type="UniPathway" id="UPA00344"/>
<dbReference type="Proteomes" id="UP000000579">
    <property type="component" value="Chromosome"/>
</dbReference>
<dbReference type="GO" id="GO:0005737">
    <property type="term" value="C:cytoplasm"/>
    <property type="evidence" value="ECO:0000318"/>
    <property type="project" value="GO_Central"/>
</dbReference>
<dbReference type="GO" id="GO:0005829">
    <property type="term" value="C:cytosol"/>
    <property type="evidence" value="ECO:0000318"/>
    <property type="project" value="GO_Central"/>
</dbReference>
<dbReference type="GO" id="GO:0005524">
    <property type="term" value="F:ATP binding"/>
    <property type="evidence" value="ECO:0007669"/>
    <property type="project" value="UniProtKB-KW"/>
</dbReference>
<dbReference type="GO" id="GO:0061605">
    <property type="term" value="F:molybdopterin-synthase adenylyltransferase activity"/>
    <property type="evidence" value="ECO:0007669"/>
    <property type="project" value="UniProtKB-EC"/>
</dbReference>
<dbReference type="GO" id="GO:0016779">
    <property type="term" value="F:nucleotidyltransferase activity"/>
    <property type="evidence" value="ECO:0000318"/>
    <property type="project" value="GO_Central"/>
</dbReference>
<dbReference type="GO" id="GO:0008146">
    <property type="term" value="F:sulfotransferase activity"/>
    <property type="evidence" value="ECO:0000318"/>
    <property type="project" value="GO_Central"/>
</dbReference>
<dbReference type="GO" id="GO:0004792">
    <property type="term" value="F:thiosulfate-cyanide sulfurtransferase activity"/>
    <property type="evidence" value="ECO:0000318"/>
    <property type="project" value="GO_Central"/>
</dbReference>
<dbReference type="GO" id="GO:0008641">
    <property type="term" value="F:ubiquitin-like modifier activating enzyme activity"/>
    <property type="evidence" value="ECO:0007669"/>
    <property type="project" value="InterPro"/>
</dbReference>
<dbReference type="GO" id="GO:0006777">
    <property type="term" value="P:Mo-molybdopterin cofactor biosynthetic process"/>
    <property type="evidence" value="ECO:0007669"/>
    <property type="project" value="UniProtKB-KW"/>
</dbReference>
<dbReference type="CDD" id="cd00757">
    <property type="entry name" value="ThiF_MoeB_HesA_family"/>
    <property type="match status" value="1"/>
</dbReference>
<dbReference type="FunFam" id="3.40.50.720:FF:000033">
    <property type="entry name" value="Adenylyltransferase and sulfurtransferase MOCS3"/>
    <property type="match status" value="1"/>
</dbReference>
<dbReference type="Gene3D" id="3.40.50.720">
    <property type="entry name" value="NAD(P)-binding Rossmann-like Domain"/>
    <property type="match status" value="1"/>
</dbReference>
<dbReference type="InterPro" id="IPR012730">
    <property type="entry name" value="Mopterin_Synthase_Sase_MoeB"/>
</dbReference>
<dbReference type="InterPro" id="IPR045886">
    <property type="entry name" value="ThiF/MoeB/HesA"/>
</dbReference>
<dbReference type="InterPro" id="IPR000594">
    <property type="entry name" value="ThiF_NAD_FAD-bd"/>
</dbReference>
<dbReference type="InterPro" id="IPR035985">
    <property type="entry name" value="Ubiquitin-activating_enz"/>
</dbReference>
<dbReference type="NCBIfam" id="TIGR02355">
    <property type="entry name" value="moeB"/>
    <property type="match status" value="1"/>
</dbReference>
<dbReference type="NCBIfam" id="NF004281">
    <property type="entry name" value="PRK05690.1"/>
    <property type="match status" value="1"/>
</dbReference>
<dbReference type="PANTHER" id="PTHR10953:SF194">
    <property type="entry name" value="MOLYBDOPTERIN-SYNTHASE ADENYLYLTRANSFERASE"/>
    <property type="match status" value="1"/>
</dbReference>
<dbReference type="PANTHER" id="PTHR10953">
    <property type="entry name" value="UBIQUITIN-ACTIVATING ENZYME E1"/>
    <property type="match status" value="1"/>
</dbReference>
<dbReference type="Pfam" id="PF00899">
    <property type="entry name" value="ThiF"/>
    <property type="match status" value="1"/>
</dbReference>
<dbReference type="SUPFAM" id="SSF69572">
    <property type="entry name" value="Activating enzymes of the ubiquitin-like proteins"/>
    <property type="match status" value="1"/>
</dbReference>
<protein>
    <recommendedName>
        <fullName>Molybdopterin-synthase adenylyltransferase</fullName>
        <ecNumber>2.7.7.80</ecNumber>
    </recommendedName>
    <alternativeName>
        <fullName>MoaD protein adenylase</fullName>
    </alternativeName>
    <alternativeName>
        <fullName>Molybdopterin-converting factor subunit 1 adenylase</fullName>
    </alternativeName>
    <alternativeName>
        <fullName>Sulfur carrier protein MoaD adenylyltransferase</fullName>
    </alternativeName>
</protein>
<comment type="function">
    <text evidence="1">Catalyzes the adenylation by ATP of the carboxyl group of the C-terminal glycine of sulfur carrier protein MoaD.</text>
</comment>
<comment type="catalytic activity">
    <reaction>
        <text>[molybdopterin-synthase sulfur-carrier protein]-C-terminal Gly-Gly + ATP + H(+) = [molybdopterin-synthase sulfur-carrier protein]-C-terminal Gly-Gly-AMP + diphosphate</text>
        <dbReference type="Rhea" id="RHEA:43616"/>
        <dbReference type="Rhea" id="RHEA-COMP:12159"/>
        <dbReference type="Rhea" id="RHEA-COMP:12202"/>
        <dbReference type="ChEBI" id="CHEBI:15378"/>
        <dbReference type="ChEBI" id="CHEBI:30616"/>
        <dbReference type="ChEBI" id="CHEBI:33019"/>
        <dbReference type="ChEBI" id="CHEBI:90618"/>
        <dbReference type="ChEBI" id="CHEBI:90778"/>
        <dbReference type="EC" id="2.7.7.80"/>
    </reaction>
</comment>
<comment type="pathway">
    <text>Cofactor biosynthesis; molybdopterin biosynthesis.</text>
</comment>
<comment type="subunit">
    <text evidence="1">Homodimer. Forms a stable heterotetrameric complex of 2 MoeB and 2 MoaD during adenylation of MoaD (By similarity).</text>
</comment>
<comment type="similarity">
    <text evidence="2">Belongs to the HesA/MoeB/ThiF family.</text>
</comment>
<name>MOEB_HAEIN</name>
<organism>
    <name type="scientific">Haemophilus influenzae (strain ATCC 51907 / DSM 11121 / KW20 / Rd)</name>
    <dbReference type="NCBI Taxonomy" id="71421"/>
    <lineage>
        <taxon>Bacteria</taxon>
        <taxon>Pseudomonadati</taxon>
        <taxon>Pseudomonadota</taxon>
        <taxon>Gammaproteobacteria</taxon>
        <taxon>Pasteurellales</taxon>
        <taxon>Pasteurellaceae</taxon>
        <taxon>Haemophilus</taxon>
    </lineage>
</organism>
<gene>
    <name type="primary">moeB</name>
    <name type="synonym">chlN</name>
    <name type="ordered locus">HI_1449</name>
</gene>
<sequence>MIELSHEEELRYNRQIILKSVDFDGQEKLKASKMLIVGLGGLGCAASQYLAAAGVGNLTLLDFDTVSLSNLQRQVLHCDARLNMPKVESAKIALEQINPHINIETINAKLDEEKLAEIIPHFDIVLDCTDNVEIRNQLDRQCNHMKVPLISGAAIRMEGQVSVFTYEPNTPTYRDLSKLFRQNVLSCVEAGVLAPIVGIVGCIQALEAIKVRLKIGKNLCGRLLMIDGFSMNIREIKLPTNME</sequence>